<protein>
    <recommendedName>
        <fullName evidence="1">L-cysteine:1D-myo-inositol 2-amino-2-deoxy-alpha-D-glucopyranoside ligase</fullName>
        <shortName evidence="1">L-Cys:GlcN-Ins ligase</shortName>
        <ecNumber evidence="1">6.3.1.13</ecNumber>
    </recommendedName>
    <alternativeName>
        <fullName evidence="1">Mycothiol ligase</fullName>
        <shortName evidence="1">MSH ligase</shortName>
    </alternativeName>
</protein>
<feature type="chain" id="PRO_0000400430" description="L-cysteine:1D-myo-inositol 2-amino-2-deoxy-alpha-D-glucopyranoside ligase">
    <location>
        <begin position="1"/>
        <end position="426"/>
    </location>
</feature>
<feature type="short sequence motif" description="'HIGH' region" evidence="1">
    <location>
        <begin position="45"/>
        <end position="55"/>
    </location>
</feature>
<feature type="short sequence motif" description="'ERGGDP' region" evidence="1">
    <location>
        <begin position="200"/>
        <end position="205"/>
    </location>
</feature>
<feature type="short sequence motif" description="'KMSKS' region" evidence="1">
    <location>
        <begin position="302"/>
        <end position="306"/>
    </location>
</feature>
<feature type="binding site" evidence="1">
    <location>
        <begin position="43"/>
        <end position="46"/>
    </location>
    <ligand>
        <name>L-cysteinyl-5'-AMP</name>
        <dbReference type="ChEBI" id="CHEBI:144924"/>
    </ligand>
</feature>
<feature type="binding site" evidence="1">
    <location>
        <position position="43"/>
    </location>
    <ligand>
        <name>Zn(2+)</name>
        <dbReference type="ChEBI" id="CHEBI:29105"/>
    </ligand>
</feature>
<feature type="binding site" evidence="1">
    <location>
        <position position="58"/>
    </location>
    <ligand>
        <name>L-cysteinyl-5'-AMP</name>
        <dbReference type="ChEBI" id="CHEBI:144924"/>
    </ligand>
</feature>
<feature type="binding site" evidence="1">
    <location>
        <begin position="81"/>
        <end position="83"/>
    </location>
    <ligand>
        <name>L-cysteinyl-5'-AMP</name>
        <dbReference type="ChEBI" id="CHEBI:144924"/>
    </ligand>
</feature>
<feature type="binding site" evidence="1">
    <location>
        <position position="241"/>
    </location>
    <ligand>
        <name>L-cysteinyl-5'-AMP</name>
        <dbReference type="ChEBI" id="CHEBI:144924"/>
    </ligand>
</feature>
<feature type="binding site" evidence="1">
    <location>
        <position position="245"/>
    </location>
    <ligand>
        <name>Zn(2+)</name>
        <dbReference type="ChEBI" id="CHEBI:29105"/>
    </ligand>
</feature>
<feature type="binding site" evidence="1">
    <location>
        <begin position="263"/>
        <end position="265"/>
    </location>
    <ligand>
        <name>L-cysteinyl-5'-AMP</name>
        <dbReference type="ChEBI" id="CHEBI:144924"/>
    </ligand>
</feature>
<feature type="binding site" evidence="1">
    <location>
        <position position="270"/>
    </location>
    <ligand>
        <name>Zn(2+)</name>
        <dbReference type="ChEBI" id="CHEBI:29105"/>
    </ligand>
</feature>
<feature type="binding site" evidence="1">
    <location>
        <position position="296"/>
    </location>
    <ligand>
        <name>L-cysteinyl-5'-AMP</name>
        <dbReference type="ChEBI" id="CHEBI:144924"/>
    </ligand>
</feature>
<name>MSHC_ARTS2</name>
<reference key="1">
    <citation type="journal article" date="2013" name="Stand. Genomic Sci.">
        <title>Complete genome sequence of Arthrobacter sp. strain FB24.</title>
        <authorList>
            <person name="Nakatsu C.H."/>
            <person name="Barabote R."/>
            <person name="Thompson S."/>
            <person name="Bruce D."/>
            <person name="Detter C."/>
            <person name="Brettin T."/>
            <person name="Han C."/>
            <person name="Beasley F."/>
            <person name="Chen W."/>
            <person name="Konopka A."/>
            <person name="Xie G."/>
        </authorList>
    </citation>
    <scope>NUCLEOTIDE SEQUENCE [LARGE SCALE GENOMIC DNA]</scope>
    <source>
        <strain>FB24</strain>
    </source>
</reference>
<proteinExistence type="inferred from homology"/>
<gene>
    <name evidence="1" type="primary">mshC</name>
    <name type="ordered locus">Arth_2168</name>
</gene>
<sequence>MKSWISRPVPQLPGRMPAVRIFDTAVGAYSTLDATGEQSLYVCGITPYDATHMGHAASYVAFDLLNRAWRDGGQRVAYVQNVTDVDDPLLERATATGVDWRDLAASQIELFQTDMAALNVLAPDHYVGAVESIPEIVPAIERLLHLGLAYRVTGTPGEPDGDVYYDVEAASKHSAEAKDAWTLGSVSGLSETEMLELFAERGGDPGRRGKRQALDPLLWRVARDGEPSWAGGELGSGRPGWHIECTVIAQKYLPAPFTVQGGGSDLIFPHHEMGAGHAYSLTGVPLARHFAHAGMVGLDGEKMSKSKGNLVLVSKLRAAGEEPAAIRLAILAHHYRTDWSWTEAGFAQAKTRLAEWRDALTMAPGESAATLIAEMRSELANDLNAPGALAAVDRWAVAAKQQAGAGSPMDQALVSDAVNALLGVEL</sequence>
<evidence type="ECO:0000255" key="1">
    <source>
        <dbReference type="HAMAP-Rule" id="MF_01697"/>
    </source>
</evidence>
<keyword id="KW-0067">ATP-binding</keyword>
<keyword id="KW-0436">Ligase</keyword>
<keyword id="KW-0479">Metal-binding</keyword>
<keyword id="KW-0547">Nucleotide-binding</keyword>
<keyword id="KW-1185">Reference proteome</keyword>
<keyword id="KW-0862">Zinc</keyword>
<organism>
    <name type="scientific">Arthrobacter sp. (strain FB24)</name>
    <dbReference type="NCBI Taxonomy" id="290399"/>
    <lineage>
        <taxon>Bacteria</taxon>
        <taxon>Bacillati</taxon>
        <taxon>Actinomycetota</taxon>
        <taxon>Actinomycetes</taxon>
        <taxon>Micrococcales</taxon>
        <taxon>Micrococcaceae</taxon>
        <taxon>Arthrobacter</taxon>
    </lineage>
</organism>
<comment type="function">
    <text evidence="1">Catalyzes the ATP-dependent condensation of GlcN-Ins and L-cysteine to form L-Cys-GlcN-Ins.</text>
</comment>
<comment type="catalytic activity">
    <reaction evidence="1">
        <text>1D-myo-inositol 2-amino-2-deoxy-alpha-D-glucopyranoside + L-cysteine + ATP = 1D-myo-inositol 2-(L-cysteinylamino)-2-deoxy-alpha-D-glucopyranoside + AMP + diphosphate + H(+)</text>
        <dbReference type="Rhea" id="RHEA:26176"/>
        <dbReference type="ChEBI" id="CHEBI:15378"/>
        <dbReference type="ChEBI" id="CHEBI:30616"/>
        <dbReference type="ChEBI" id="CHEBI:33019"/>
        <dbReference type="ChEBI" id="CHEBI:35235"/>
        <dbReference type="ChEBI" id="CHEBI:58886"/>
        <dbReference type="ChEBI" id="CHEBI:58887"/>
        <dbReference type="ChEBI" id="CHEBI:456215"/>
        <dbReference type="EC" id="6.3.1.13"/>
    </reaction>
</comment>
<comment type="cofactor">
    <cofactor evidence="1">
        <name>Zn(2+)</name>
        <dbReference type="ChEBI" id="CHEBI:29105"/>
    </cofactor>
    <text evidence="1">Binds 1 zinc ion per subunit.</text>
</comment>
<comment type="subunit">
    <text evidence="1">Monomer.</text>
</comment>
<comment type="similarity">
    <text evidence="1">Belongs to the class-I aminoacyl-tRNA synthetase family. MshC subfamily.</text>
</comment>
<accession>A0JWX8</accession>
<dbReference type="EC" id="6.3.1.13" evidence="1"/>
<dbReference type="EMBL" id="CP000454">
    <property type="protein sequence ID" value="ABK03548.1"/>
    <property type="molecule type" value="Genomic_DNA"/>
</dbReference>
<dbReference type="RefSeq" id="WP_011692014.1">
    <property type="nucleotide sequence ID" value="NC_008541.1"/>
</dbReference>
<dbReference type="SMR" id="A0JWX8"/>
<dbReference type="STRING" id="290399.Arth_2168"/>
<dbReference type="KEGG" id="art:Arth_2168"/>
<dbReference type="eggNOG" id="COG0215">
    <property type="taxonomic scope" value="Bacteria"/>
</dbReference>
<dbReference type="HOGENOM" id="CLU_013528_0_0_11"/>
<dbReference type="OrthoDB" id="9815130at2"/>
<dbReference type="Proteomes" id="UP000000754">
    <property type="component" value="Chromosome"/>
</dbReference>
<dbReference type="GO" id="GO:0005829">
    <property type="term" value="C:cytosol"/>
    <property type="evidence" value="ECO:0007669"/>
    <property type="project" value="TreeGrafter"/>
</dbReference>
<dbReference type="GO" id="GO:0005524">
    <property type="term" value="F:ATP binding"/>
    <property type="evidence" value="ECO:0007669"/>
    <property type="project" value="UniProtKB-KW"/>
</dbReference>
<dbReference type="GO" id="GO:0035446">
    <property type="term" value="F:cysteine-glucosaminylinositol ligase activity"/>
    <property type="evidence" value="ECO:0007669"/>
    <property type="project" value="UniProtKB-UniRule"/>
</dbReference>
<dbReference type="GO" id="GO:0004817">
    <property type="term" value="F:cysteine-tRNA ligase activity"/>
    <property type="evidence" value="ECO:0007669"/>
    <property type="project" value="TreeGrafter"/>
</dbReference>
<dbReference type="GO" id="GO:0008270">
    <property type="term" value="F:zinc ion binding"/>
    <property type="evidence" value="ECO:0007669"/>
    <property type="project" value="UniProtKB-UniRule"/>
</dbReference>
<dbReference type="GO" id="GO:0006423">
    <property type="term" value="P:cysteinyl-tRNA aminoacylation"/>
    <property type="evidence" value="ECO:0007669"/>
    <property type="project" value="TreeGrafter"/>
</dbReference>
<dbReference type="GO" id="GO:0010125">
    <property type="term" value="P:mycothiol biosynthetic process"/>
    <property type="evidence" value="ECO:0007669"/>
    <property type="project" value="UniProtKB-UniRule"/>
</dbReference>
<dbReference type="Gene3D" id="1.20.120.640">
    <property type="entry name" value="Anticodon-binding domain of a subclass of class I aminoacyl-tRNA synthetases"/>
    <property type="match status" value="1"/>
</dbReference>
<dbReference type="Gene3D" id="3.40.50.620">
    <property type="entry name" value="HUPs"/>
    <property type="match status" value="1"/>
</dbReference>
<dbReference type="HAMAP" id="MF_01697">
    <property type="entry name" value="MshC"/>
    <property type="match status" value="1"/>
</dbReference>
<dbReference type="InterPro" id="IPR024909">
    <property type="entry name" value="Cys-tRNA/MSH_ligase"/>
</dbReference>
<dbReference type="InterPro" id="IPR017812">
    <property type="entry name" value="Mycothiol_ligase_MshC"/>
</dbReference>
<dbReference type="InterPro" id="IPR014729">
    <property type="entry name" value="Rossmann-like_a/b/a_fold"/>
</dbReference>
<dbReference type="InterPro" id="IPR032678">
    <property type="entry name" value="tRNA-synt_1_cat_dom"/>
</dbReference>
<dbReference type="NCBIfam" id="TIGR03447">
    <property type="entry name" value="mycothiol_MshC"/>
    <property type="match status" value="1"/>
</dbReference>
<dbReference type="PANTHER" id="PTHR10890:SF3">
    <property type="entry name" value="CYSTEINE--TRNA LIGASE, CYTOPLASMIC"/>
    <property type="match status" value="1"/>
</dbReference>
<dbReference type="PANTHER" id="PTHR10890">
    <property type="entry name" value="CYSTEINYL-TRNA SYNTHETASE"/>
    <property type="match status" value="1"/>
</dbReference>
<dbReference type="Pfam" id="PF01406">
    <property type="entry name" value="tRNA-synt_1e"/>
    <property type="match status" value="1"/>
</dbReference>
<dbReference type="PRINTS" id="PR00983">
    <property type="entry name" value="TRNASYNTHCYS"/>
</dbReference>
<dbReference type="SUPFAM" id="SSF52374">
    <property type="entry name" value="Nucleotidylyl transferase"/>
    <property type="match status" value="1"/>
</dbReference>